<protein>
    <recommendedName>
        <fullName evidence="9">Poly(rC)-binding protein 1</fullName>
    </recommendedName>
    <alternativeName>
        <fullName evidence="8">Alpha-CP1</fullName>
    </alternativeName>
    <alternativeName>
        <fullName>Heterogeneous nuclear ribonucleoprotein E1</fullName>
        <shortName>hnRNP E1</shortName>
    </alternativeName>
    <alternativeName>
        <fullName>Nucleic acid-binding protein SUB2.3</fullName>
    </alternativeName>
</protein>
<evidence type="ECO:0000250" key="1">
    <source>
        <dbReference type="UniProtKB" id="P60335"/>
    </source>
</evidence>
<evidence type="ECO:0000255" key="2">
    <source>
        <dbReference type="PROSITE-ProRule" id="PRU00117"/>
    </source>
</evidence>
<evidence type="ECO:0000269" key="3">
    <source>
    </source>
</evidence>
<evidence type="ECO:0000269" key="4">
    <source>
    </source>
</evidence>
<evidence type="ECO:0000269" key="5">
    <source>
    </source>
</evidence>
<evidence type="ECO:0000269" key="6">
    <source>
    </source>
</evidence>
<evidence type="ECO:0000269" key="7">
    <source>
    </source>
</evidence>
<evidence type="ECO:0000303" key="8">
    <source>
    </source>
</evidence>
<evidence type="ECO:0000303" key="9">
    <source>
    </source>
</evidence>
<evidence type="ECO:0000305" key="10"/>
<evidence type="ECO:0000312" key="11">
    <source>
        <dbReference type="HGNC" id="HGNC:8647"/>
    </source>
</evidence>
<evidence type="ECO:0007744" key="12">
    <source>
    </source>
</evidence>
<evidence type="ECO:0007744" key="13">
    <source>
    </source>
</evidence>
<evidence type="ECO:0007744" key="14">
    <source>
    </source>
</evidence>
<evidence type="ECO:0007744" key="15">
    <source>
    </source>
</evidence>
<evidence type="ECO:0007744" key="16">
    <source>
    </source>
</evidence>
<evidence type="ECO:0007744" key="17">
    <source>
    </source>
</evidence>
<evidence type="ECO:0007744" key="18">
    <source>
    </source>
</evidence>
<evidence type="ECO:0007744" key="19">
    <source>
    </source>
</evidence>
<evidence type="ECO:0007744" key="20">
    <source>
    </source>
</evidence>
<evidence type="ECO:0007829" key="21">
    <source>
        <dbReference type="PDB" id="1WVN"/>
    </source>
</evidence>
<evidence type="ECO:0007829" key="22">
    <source>
        <dbReference type="PDB" id="3VKE"/>
    </source>
</evidence>
<comment type="function">
    <text evidence="1 4 5 6 7">Single-stranded nucleic acid binding protein that binds preferentially to oligo dC (PubMed:15731341, PubMed:7556077, PubMed:7607214, PubMed:8152927). Together with PCBP2, required for erythropoiesis, possibly by regulating mRNA splicing (By similarity).</text>
</comment>
<comment type="function">
    <text evidence="3">(Microbial infection) In case of infection by poliovirus, plays a role in initiation of viral RNA replication in concert with the viral protein 3CD.</text>
</comment>
<comment type="interaction">
    <interactant intactId="EBI-946095">
        <id>Q15365</id>
    </interactant>
    <interactant intactId="EBI-1058566">
        <id>O00425</id>
        <label>IGF2BP3</label>
    </interactant>
    <organismsDiffer>false</organismsDiffer>
    <experiments>3</experiments>
</comment>
<comment type="interaction">
    <interactant intactId="EBI-946095">
        <id>Q15365</id>
    </interactant>
    <interactant intactId="EBI-8284732">
        <id>Q13351</id>
        <label>KLF1</label>
    </interactant>
    <organismsDiffer>false</organismsDiffer>
    <experiments>3</experiments>
</comment>
<comment type="interaction">
    <interactant intactId="EBI-946095">
        <id>Q15365</id>
    </interactant>
    <interactant intactId="EBI-1307">
        <id>Q13153</id>
        <label>PAK1</label>
    </interactant>
    <organismsDiffer>false</organismsDiffer>
    <experiments>2</experiments>
</comment>
<comment type="interaction">
    <interactant intactId="EBI-946095">
        <id>Q15365</id>
    </interactant>
    <interactant intactId="EBI-15628682">
        <id>Q13153-1</id>
        <label>PAK1</label>
    </interactant>
    <organismsDiffer>false</organismsDiffer>
    <experiments>5</experiments>
</comment>
<comment type="interaction">
    <interactant intactId="EBI-946095">
        <id>Q15365</id>
    </interactant>
    <interactant intactId="EBI-945799">
        <id>Q15366</id>
        <label>PCBP2</label>
    </interactant>
    <organismsDiffer>false</organismsDiffer>
    <experiments>2</experiments>
</comment>
<comment type="interaction">
    <interactant intactId="EBI-946095">
        <id>Q15365</id>
    </interactant>
    <interactant intactId="EBI-396072">
        <id>Q13427</id>
        <label>PPIG</label>
    </interactant>
    <organismsDiffer>false</organismsDiffer>
    <experiments>2</experiments>
</comment>
<comment type="interaction">
    <interactant intactId="EBI-946095">
        <id>Q15365</id>
    </interactant>
    <interactant intactId="EBI-538479">
        <id>Q6P2Q9</id>
        <label>PRPF8</label>
    </interactant>
    <organismsDiffer>false</organismsDiffer>
    <experiments>2</experiments>
</comment>
<comment type="interaction">
    <interactant intactId="EBI-946095">
        <id>Q15365</id>
    </interactant>
    <interactant intactId="EBI-350540">
        <id>P26599</id>
        <label>PTBP1</label>
    </interactant>
    <organismsDiffer>false</organismsDiffer>
    <experiments>2</experiments>
</comment>
<comment type="interaction">
    <interactant intactId="EBI-946095">
        <id>Q15365</id>
    </interactant>
    <interactant intactId="EBI-1053259">
        <id>Q9UHX1</id>
        <label>PUF60</label>
    </interactant>
    <organismsDiffer>false</organismsDiffer>
    <experiments>2</experiments>
</comment>
<comment type="interaction">
    <interactant intactId="EBI-946095">
        <id>Q15365</id>
    </interactant>
    <interactant intactId="EBI-945792">
        <id>Q96PU8</id>
        <label>QKI</label>
    </interactant>
    <organismsDiffer>false</organismsDiffer>
    <experiments>3</experiments>
</comment>
<comment type="interaction">
    <interactant intactId="EBI-946095">
        <id>Q15365</id>
    </interactant>
    <interactant intactId="EBI-11963050">
        <id>O43251-10</id>
        <label>RBFOX2</label>
    </interactant>
    <organismsDiffer>false</organismsDiffer>
    <experiments>3</experiments>
</comment>
<comment type="interaction">
    <interactant intactId="EBI-946095">
        <id>Q15365</id>
    </interactant>
    <interactant intactId="EBI-2949699">
        <id>P98179</id>
        <label>RBM3</label>
    </interactant>
    <organismsDiffer>false</organismsDiffer>
    <experiments>3</experiments>
</comment>
<comment type="interaction">
    <interactant intactId="EBI-946095">
        <id>Q15365</id>
    </interactant>
    <interactant intactId="EBI-395290">
        <id>Q14498</id>
        <label>RBM39</label>
    </interactant>
    <organismsDiffer>false</organismsDiffer>
    <experiments>3</experiments>
</comment>
<comment type="interaction">
    <interactant intactId="EBI-946095">
        <id>Q15365</id>
    </interactant>
    <interactant intactId="EBI-11032687">
        <id>Q14498-2</id>
        <label>RBM39</label>
    </interactant>
    <organismsDiffer>false</organismsDiffer>
    <experiments>2</experiments>
</comment>
<comment type="interaction">
    <interactant intactId="EBI-946095">
        <id>Q15365</id>
    </interactant>
    <interactant intactId="EBI-11987469">
        <id>Q6ZRY4</id>
        <label>RBPMS2</label>
    </interactant>
    <organismsDiffer>false</organismsDiffer>
    <experiments>4</experiments>
</comment>
<comment type="interaction">
    <interactant intactId="EBI-946095">
        <id>Q15365</id>
    </interactant>
    <interactant intactId="EBI-607085">
        <id>P09012</id>
        <label>SNRPA</label>
    </interactant>
    <organismsDiffer>false</organismsDiffer>
    <experiments>9</experiments>
</comment>
<comment type="interaction">
    <interactant intactId="EBI-946095">
        <id>Q15365</id>
    </interactant>
    <interactant intactId="EBI-1790529">
        <id>Q96EK4</id>
        <label>THAP11</label>
    </interactant>
    <organismsDiffer>false</organismsDiffer>
    <experiments>4</experiments>
</comment>
<comment type="interaction">
    <interactant intactId="EBI-946095">
        <id>Q15365</id>
    </interactant>
    <interactant intactId="EBI-11741437">
        <id>Q08117-2</id>
        <label>TLE5</label>
    </interactant>
    <organismsDiffer>false</organismsDiffer>
    <experiments>3</experiments>
</comment>
<comment type="interaction">
    <interactant intactId="EBI-946095">
        <id>Q15365</id>
    </interactant>
    <interactant intactId="EBI-739485">
        <id>Q9Y3Q8</id>
        <label>TSC22D4</label>
    </interactant>
    <organismsDiffer>false</organismsDiffer>
    <experiments>2</experiments>
</comment>
<comment type="interaction">
    <interactant intactId="EBI-946095">
        <id>Q15365</id>
    </interactant>
    <interactant intactId="EBI-714455">
        <id>Q9Y2W2</id>
        <label>WBP11</label>
    </interactant>
    <organismsDiffer>false</organismsDiffer>
    <experiments>2</experiments>
</comment>
<comment type="interaction">
    <interactant intactId="EBI-946095">
        <id>Q15365</id>
    </interactant>
    <interactant intactId="EBI-3920997">
        <id>Q96NB3</id>
        <label>ZNF830</label>
    </interactant>
    <organismsDiffer>false</organismsDiffer>
    <experiments>2</experiments>
</comment>
<comment type="interaction">
    <interactant intactId="EBI-946095">
        <id>Q15365</id>
    </interactant>
    <interactant intactId="EBI-9640556">
        <id>O41951</id>
        <label>GAMMAHV.ORF34</label>
    </interactant>
    <organismsDiffer>true</organismsDiffer>
    <experiments>4</experiments>
</comment>
<comment type="interaction">
    <interactant intactId="EBI-946095">
        <id>Q15365</id>
    </interactant>
    <interactant intactId="EBI-11514477">
        <id>Q67020</id>
        <label>PA</label>
    </interactant>
    <organismsDiffer>true</organismsDiffer>
    <experiments>2</experiments>
</comment>
<comment type="subcellular location">
    <subcellularLocation>
        <location evidence="6">Nucleus</location>
    </subcellularLocation>
    <subcellularLocation>
        <location evidence="6">Cytoplasm</location>
    </subcellularLocation>
    <text evidence="6">Loosely bound in the nucleus (PubMed:7607214). May shuttle between the nucleus and the cytoplasm (PubMed:7607214).</text>
</comment>
<comment type="tissue specificity">
    <text evidence="6 7">Abundantly expressed in skeletal muscle, thymus and peripheral blood leukocytes while a lower expression is observed in prostate, spleen, testis, ovary, small intestine, heart, liver, adrenal and thyroid glands.</text>
</comment>
<comment type="PTM">
    <text evidence="6">Phosphorylated; lowers poly(rC)-binding activity.</text>
</comment>
<comment type="sequence caution" evidence="10">
    <conflict type="frameshift">
        <sequence resource="EMBL-CDS" id="CAA82631"/>
    </conflict>
</comment>
<name>PCBP1_HUMAN</name>
<reference key="1">
    <citation type="journal article" date="1995" name="Eur. J. Biochem.">
        <title>Characterisation of two major cellular poly(rC)-binding human proteins, each containing three K-homologous (KH) domains.</title>
        <authorList>
            <person name="Leffers H."/>
            <person name="Dejgaard K."/>
            <person name="Celis J.E."/>
        </authorList>
    </citation>
    <scope>NUCLEOTIDE SEQUENCE [MRNA]</scope>
    <scope>FUNCTION</scope>
    <scope>SUBCELLULAR LOCATION</scope>
    <scope>PHOSPHORYLATION</scope>
    <scope>TISSUE SPECIFICITY</scope>
</reference>
<reference key="2">
    <citation type="journal article" date="1995" name="EMBO J.">
        <title>Identification of two KH domain proteins in the alpha-globin mRNP stability complex.</title>
        <authorList>
            <person name="Kiledjian M."/>
            <person name="Wang X."/>
            <person name="Liebhaber S.A."/>
        </authorList>
    </citation>
    <scope>NUCLEOTIDE SEQUENCE [MRNA]</scope>
    <scope>FUNCTION</scope>
</reference>
<reference key="3">
    <citation type="journal article" date="1994" name="Nucleic Acids Res.">
        <title>Tissue specific expression and cDNA structure of a human transcript encoding a nucleic acid binding [oligo(dC)] protein related to the pre-mRNA binding protein K.</title>
        <authorList>
            <person name="Aasheim H.-C."/>
            <person name="Loukianova T."/>
            <person name="Deggerdal A."/>
            <person name="Smeland E.B."/>
        </authorList>
    </citation>
    <scope>NUCLEOTIDE SEQUENCE [MRNA]</scope>
    <scope>FUNCTION</scope>
    <scope>TISSUE SPECIFICITY</scope>
    <source>
        <tissue>Lymphocyte</tissue>
    </source>
</reference>
<reference key="4">
    <citation type="journal article" date="2004" name="Genome Res.">
        <title>The status, quality, and expansion of the NIH full-length cDNA project: the Mammalian Gene Collection (MGC).</title>
        <authorList>
            <consortium name="The MGC Project Team"/>
        </authorList>
    </citation>
    <scope>NUCLEOTIDE SEQUENCE [LARGE SCALE MRNA]</scope>
    <source>
        <tissue>Skin</tissue>
    </source>
</reference>
<reference key="5">
    <citation type="submission" date="2008-12" db="UniProtKB">
        <authorList>
            <person name="Lubec G."/>
            <person name="Afjehi-Sadat L."/>
            <person name="Chen W.-Q."/>
            <person name="Sun Y."/>
        </authorList>
    </citation>
    <scope>PROTEIN SEQUENCE OF 47-70; 79-115; 125-160; 178-200; 298-306 AND 315-346</scope>
    <scope>IDENTIFICATION BY MASS SPECTROMETRY</scope>
    <source>
        <tissue>Brain</tissue>
        <tissue>Cajal-Retzius cell</tissue>
        <tissue>Fetal brain cortex</tissue>
    </source>
</reference>
<reference key="6">
    <citation type="journal article" date="2002" name="J. Virol.">
        <title>Distinct poly(rC) binding protein KH domain determinants for poliovirus translation initiation and viral RNA replication.</title>
        <authorList>
            <person name="Walter B.L."/>
            <person name="Parsley T.B."/>
            <person name="Ehrenfeld E."/>
            <person name="Semler B.L."/>
        </authorList>
    </citation>
    <scope>FUNCTION (MICROBIAL INFECTION)</scope>
</reference>
<reference key="7">
    <citation type="journal article" date="2006" name="Cell">
        <title>Global, in vivo, and site-specific phosphorylation dynamics in signaling networks.</title>
        <authorList>
            <person name="Olsen J.V."/>
            <person name="Blagoev B."/>
            <person name="Gnad F."/>
            <person name="Macek B."/>
            <person name="Kumar C."/>
            <person name="Mortensen P."/>
            <person name="Mann M."/>
        </authorList>
    </citation>
    <scope>IDENTIFICATION BY MASS SPECTROMETRY [LARGE SCALE ANALYSIS]</scope>
    <source>
        <tissue>Cervix carcinoma</tissue>
    </source>
</reference>
<reference key="8">
    <citation type="journal article" date="2006" name="Nat. Biotechnol.">
        <title>A probability-based approach for high-throughput protein phosphorylation analysis and site localization.</title>
        <authorList>
            <person name="Beausoleil S.A."/>
            <person name="Villen J."/>
            <person name="Gerber S.A."/>
            <person name="Rush J."/>
            <person name="Gygi S.P."/>
        </authorList>
    </citation>
    <scope>PHOSPHORYLATION [LARGE SCALE ANALYSIS] AT SER-173</scope>
    <scope>IDENTIFICATION BY MASS SPECTROMETRY [LARGE SCALE ANALYSIS]</scope>
    <source>
        <tissue>Cervix carcinoma</tissue>
    </source>
</reference>
<reference key="9">
    <citation type="journal article" date="2007" name="J. Proteome Res.">
        <title>Improved titanium dioxide enrichment of phosphopeptides from HeLa cells and high confident phosphopeptide identification by cross-validation of MS/MS and MS/MS/MS spectra.</title>
        <authorList>
            <person name="Yu L.R."/>
            <person name="Zhu Z."/>
            <person name="Chan K.C."/>
            <person name="Issaq H.J."/>
            <person name="Dimitrov D.S."/>
            <person name="Veenstra T.D."/>
        </authorList>
    </citation>
    <scope>IDENTIFICATION BY MASS SPECTROMETRY [LARGE SCALE ANALYSIS]</scope>
    <source>
        <tissue>Cervix carcinoma</tissue>
    </source>
</reference>
<reference key="10">
    <citation type="journal article" date="2008" name="Mol. Cell">
        <title>Kinase-selective enrichment enables quantitative phosphoproteomics of the kinome across the cell cycle.</title>
        <authorList>
            <person name="Daub H."/>
            <person name="Olsen J.V."/>
            <person name="Bairlein M."/>
            <person name="Gnad F."/>
            <person name="Oppermann F.S."/>
            <person name="Korner R."/>
            <person name="Greff Z."/>
            <person name="Keri G."/>
            <person name="Stemmann O."/>
            <person name="Mann M."/>
        </authorList>
    </citation>
    <scope>IDENTIFICATION BY MASS SPECTROMETRY [LARGE SCALE ANALYSIS]</scope>
    <source>
        <tissue>Cervix carcinoma</tissue>
    </source>
</reference>
<reference key="11">
    <citation type="journal article" date="2008" name="Proc. Natl. Acad. Sci. U.S.A.">
        <title>A quantitative atlas of mitotic phosphorylation.</title>
        <authorList>
            <person name="Dephoure N."/>
            <person name="Zhou C."/>
            <person name="Villen J."/>
            <person name="Beausoleil S.A."/>
            <person name="Bakalarski C.E."/>
            <person name="Elledge S.J."/>
            <person name="Gygi S.P."/>
        </authorList>
    </citation>
    <scope>PHOSPHORYLATION [LARGE SCALE ANALYSIS] AT SER-173 AND SER-190</scope>
    <scope>IDENTIFICATION BY MASS SPECTROMETRY [LARGE SCALE ANALYSIS]</scope>
    <source>
        <tissue>Cervix carcinoma</tissue>
    </source>
</reference>
<reference key="12">
    <citation type="journal article" date="2009" name="Anal. Chem.">
        <title>Lys-N and trypsin cover complementary parts of the phosphoproteome in a refined SCX-based approach.</title>
        <authorList>
            <person name="Gauci S."/>
            <person name="Helbig A.O."/>
            <person name="Slijper M."/>
            <person name="Krijgsveld J."/>
            <person name="Heck A.J."/>
            <person name="Mohammed S."/>
        </authorList>
    </citation>
    <scope>IDENTIFICATION BY MASS SPECTROMETRY [LARGE SCALE ANALYSIS]</scope>
</reference>
<reference key="13">
    <citation type="journal article" date="2009" name="Mol. Cell. Proteomics">
        <title>Large-scale proteomics analysis of the human kinome.</title>
        <authorList>
            <person name="Oppermann F.S."/>
            <person name="Gnad F."/>
            <person name="Olsen J.V."/>
            <person name="Hornberger R."/>
            <person name="Greff Z."/>
            <person name="Keri G."/>
            <person name="Mann M."/>
            <person name="Daub H."/>
        </authorList>
    </citation>
    <scope>IDENTIFICATION BY MASS SPECTROMETRY [LARGE SCALE ANALYSIS]</scope>
</reference>
<reference key="14">
    <citation type="journal article" date="2009" name="Sci. Signal.">
        <title>Quantitative phosphoproteomic analysis of T cell receptor signaling reveals system-wide modulation of protein-protein interactions.</title>
        <authorList>
            <person name="Mayya V."/>
            <person name="Lundgren D.H."/>
            <person name="Hwang S.-I."/>
            <person name="Rezaul K."/>
            <person name="Wu L."/>
            <person name="Eng J.K."/>
            <person name="Rodionov V."/>
            <person name="Han D.K."/>
        </authorList>
    </citation>
    <scope>PHOSPHORYLATION [LARGE SCALE ANALYSIS] AT SER-173 AND SER-190</scope>
    <scope>IDENTIFICATION BY MASS SPECTROMETRY [LARGE SCALE ANALYSIS]</scope>
    <source>
        <tissue>Leukemic T-cell</tissue>
    </source>
</reference>
<reference key="15">
    <citation type="journal article" date="2010" name="Sci. Signal.">
        <title>Quantitative phosphoproteomics reveals widespread full phosphorylation site occupancy during mitosis.</title>
        <authorList>
            <person name="Olsen J.V."/>
            <person name="Vermeulen M."/>
            <person name="Santamaria A."/>
            <person name="Kumar C."/>
            <person name="Miller M.L."/>
            <person name="Jensen L.J."/>
            <person name="Gnad F."/>
            <person name="Cox J."/>
            <person name="Jensen T.S."/>
            <person name="Nigg E.A."/>
            <person name="Brunak S."/>
            <person name="Mann M."/>
        </authorList>
    </citation>
    <scope>PHOSPHORYLATION [LARGE SCALE ANALYSIS] AT SER-173</scope>
    <scope>IDENTIFICATION BY MASS SPECTROMETRY [LARGE SCALE ANALYSIS]</scope>
    <source>
        <tissue>Cervix carcinoma</tissue>
    </source>
</reference>
<reference key="16">
    <citation type="journal article" date="2011" name="BMC Syst. Biol.">
        <title>Initial characterization of the human central proteome.</title>
        <authorList>
            <person name="Burkard T.R."/>
            <person name="Planyavsky M."/>
            <person name="Kaupe I."/>
            <person name="Breitwieser F.P."/>
            <person name="Buerckstuemmer T."/>
            <person name="Bennett K.L."/>
            <person name="Superti-Furga G."/>
            <person name="Colinge J."/>
        </authorList>
    </citation>
    <scope>IDENTIFICATION BY MASS SPECTROMETRY [LARGE SCALE ANALYSIS]</scope>
</reference>
<reference key="17">
    <citation type="journal article" date="2011" name="Sci. Signal.">
        <title>System-wide temporal characterization of the proteome and phosphoproteome of human embryonic stem cell differentiation.</title>
        <authorList>
            <person name="Rigbolt K.T."/>
            <person name="Prokhorova T.A."/>
            <person name="Akimov V."/>
            <person name="Henningsen J."/>
            <person name="Johansen P.T."/>
            <person name="Kratchmarova I."/>
            <person name="Kassem M."/>
            <person name="Mann M."/>
            <person name="Olsen J.V."/>
            <person name="Blagoev B."/>
        </authorList>
    </citation>
    <scope>PHOSPHORYLATION [LARGE SCALE ANALYSIS] AT SER-173</scope>
    <scope>IDENTIFICATION BY MASS SPECTROMETRY [LARGE SCALE ANALYSIS]</scope>
</reference>
<reference key="18">
    <citation type="journal article" date="2012" name="Proc. Natl. Acad. Sci. U.S.A.">
        <title>N-terminal acetylome analyses and functional insights of the N-terminal acetyltransferase NatB.</title>
        <authorList>
            <person name="Van Damme P."/>
            <person name="Lasa M."/>
            <person name="Polevoda B."/>
            <person name="Gazquez C."/>
            <person name="Elosegui-Artola A."/>
            <person name="Kim D.S."/>
            <person name="De Juan-Pardo E."/>
            <person name="Demeyer K."/>
            <person name="Hole K."/>
            <person name="Larrea E."/>
            <person name="Timmerman E."/>
            <person name="Prieto J."/>
            <person name="Arnesen T."/>
            <person name="Sherman F."/>
            <person name="Gevaert K."/>
            <person name="Aldabe R."/>
        </authorList>
    </citation>
    <scope>ACETYLATION [LARGE SCALE ANALYSIS] AT MET-1</scope>
    <scope>IDENTIFICATION BY MASS SPECTROMETRY [LARGE SCALE ANALYSIS]</scope>
</reference>
<reference key="19">
    <citation type="journal article" date="2013" name="J. Proteome Res.">
        <title>Toward a comprehensive characterization of a human cancer cell phosphoproteome.</title>
        <authorList>
            <person name="Zhou H."/>
            <person name="Di Palma S."/>
            <person name="Preisinger C."/>
            <person name="Peng M."/>
            <person name="Polat A.N."/>
            <person name="Heck A.J."/>
            <person name="Mohammed S."/>
        </authorList>
    </citation>
    <scope>PHOSPHORYLATION [LARGE SCALE ANALYSIS] AT SER-173; SER-246 AND SER-264</scope>
    <scope>IDENTIFICATION BY MASS SPECTROMETRY [LARGE SCALE ANALYSIS]</scope>
    <source>
        <tissue>Cervix carcinoma</tissue>
        <tissue>Erythroleukemia</tissue>
    </source>
</reference>
<reference key="20">
    <citation type="journal article" date="2014" name="J. Proteomics">
        <title>An enzyme assisted RP-RPLC approach for in-depth analysis of human liver phosphoproteome.</title>
        <authorList>
            <person name="Bian Y."/>
            <person name="Song C."/>
            <person name="Cheng K."/>
            <person name="Dong M."/>
            <person name="Wang F."/>
            <person name="Huang J."/>
            <person name="Sun D."/>
            <person name="Wang L."/>
            <person name="Ye M."/>
            <person name="Zou H."/>
        </authorList>
    </citation>
    <scope>PHOSPHORYLATION [LARGE SCALE ANALYSIS] AT SER-173 AND SER-273</scope>
    <scope>IDENTIFICATION BY MASS SPECTROMETRY [LARGE SCALE ANALYSIS]</scope>
    <source>
        <tissue>Liver</tissue>
    </source>
</reference>
<reference key="21">
    <citation type="journal article" date="2015" name="Proteomics">
        <title>N-terminome analysis of the human mitochondrial proteome.</title>
        <authorList>
            <person name="Vaca Jacome A.S."/>
            <person name="Rabilloud T."/>
            <person name="Schaeffer-Reiss C."/>
            <person name="Rompais M."/>
            <person name="Ayoub D."/>
            <person name="Lane L."/>
            <person name="Bairoch A."/>
            <person name="Van Dorsselaer A."/>
            <person name="Carapito C."/>
        </authorList>
    </citation>
    <scope>IDENTIFICATION BY MASS SPECTROMETRY [LARGE SCALE ANALYSIS]</scope>
</reference>
<reference key="22">
    <citation type="journal article" date="2017" name="Nat. Struct. Mol. Biol.">
        <title>Site-specific mapping of the human SUMO proteome reveals co-modification with phosphorylation.</title>
        <authorList>
            <person name="Hendriks I.A."/>
            <person name="Lyon D."/>
            <person name="Young C."/>
            <person name="Jensen L.J."/>
            <person name="Vertegaal A.C."/>
            <person name="Nielsen M.L."/>
        </authorList>
    </citation>
    <scope>SUMOYLATION [LARGE SCALE ANALYSIS] AT LYS-115</scope>
    <scope>IDENTIFICATION BY MASS SPECTROMETRY [LARGE SCALE ANALYSIS]</scope>
</reference>
<reference key="23">
    <citation type="journal article" date="2005" name="Nucleic Acids Res.">
        <title>Structure and RNA binding of the third KH domain of poly(C)-binding protein 1.</title>
        <authorList>
            <person name="Sidiqi M."/>
            <person name="Wilce J.A."/>
            <person name="Vivian J.P."/>
            <person name="Porter C.J."/>
            <person name="Barker A."/>
            <person name="Leedman P.J."/>
            <person name="Wilce M.C."/>
        </authorList>
    </citation>
    <scope>X-RAY CRYSTALLOGRAPHY (2.1 ANGSTROMS) OF 279-356</scope>
    <scope>FUNCTION</scope>
    <scope>RNA-BINDING</scope>
</reference>
<sequence>MDAGVTESGLNVTLTIRLLMHGKEVGSIIGKKGESVKRIREESGARINISEGNCPERIITLTGPTNAIFKAFAMIIDKLEEDINSSMTNSTAASRPPVTLRLVVPATQCGSLIGKGGCKIKEIRESTGAQVQVAGDMLPNSTERAITIAGVPQSVTECVKQICLVMLETLSQSPQGRVMTIPYQPMPASSPVICAGGQDRCSDAAGYPHATHDLEGPPLDAYSIQGQHTISPLDLAKLNQVARQQSHFAMMHGGTGFAGIDSSSPEVKGYWASLDASTQTTHELTIPNNLIGCIIGRQGANINEIRQMSGAQIKIANPVEGSSGRQVTITGSAASISLAQYLINARLSSEKGMGCS</sequence>
<organism>
    <name type="scientific">Homo sapiens</name>
    <name type="common">Human</name>
    <dbReference type="NCBI Taxonomy" id="9606"/>
    <lineage>
        <taxon>Eukaryota</taxon>
        <taxon>Metazoa</taxon>
        <taxon>Chordata</taxon>
        <taxon>Craniata</taxon>
        <taxon>Vertebrata</taxon>
        <taxon>Euteleostomi</taxon>
        <taxon>Mammalia</taxon>
        <taxon>Eutheria</taxon>
        <taxon>Euarchontoglires</taxon>
        <taxon>Primates</taxon>
        <taxon>Haplorrhini</taxon>
        <taxon>Catarrhini</taxon>
        <taxon>Hominidae</taxon>
        <taxon>Homo</taxon>
    </lineage>
</organism>
<feature type="chain" id="PRO_0000050087" description="Poly(rC)-binding protein 1">
    <location>
        <begin position="1"/>
        <end position="356"/>
    </location>
</feature>
<feature type="domain" description="KH 1" evidence="2">
    <location>
        <begin position="13"/>
        <end position="75"/>
    </location>
</feature>
<feature type="domain" description="KH 2" evidence="2">
    <location>
        <begin position="97"/>
        <end position="162"/>
    </location>
</feature>
<feature type="domain" description="KH 3" evidence="2">
    <location>
        <begin position="279"/>
        <end position="343"/>
    </location>
</feature>
<feature type="modified residue" description="N-acetylmethionine" evidence="17">
    <location>
        <position position="1"/>
    </location>
</feature>
<feature type="modified residue" description="Phosphoserine" evidence="12 13 14 15 16 18 19">
    <location>
        <position position="173"/>
    </location>
</feature>
<feature type="modified residue" description="Phosphoserine" evidence="1">
    <location>
        <position position="189"/>
    </location>
</feature>
<feature type="modified residue" description="Phosphoserine" evidence="13 14">
    <location>
        <position position="190"/>
    </location>
</feature>
<feature type="modified residue" description="Phosphoserine" evidence="18">
    <location>
        <position position="246"/>
    </location>
</feature>
<feature type="modified residue" description="Phosphoserine" evidence="18">
    <location>
        <position position="264"/>
    </location>
</feature>
<feature type="modified residue" description="Phosphoserine" evidence="19">
    <location>
        <position position="273"/>
    </location>
</feature>
<feature type="cross-link" description="Glycyl lysine isopeptide (Lys-Gly) (interchain with G-Cter in SUMO2)" evidence="20">
    <location>
        <position position="115"/>
    </location>
</feature>
<feature type="sequence conflict" description="In Ref. 1; CAA55016." evidence="10" ref="1">
    <original>A</original>
    <variation>V</variation>
    <location>
        <position position="205"/>
    </location>
</feature>
<feature type="sequence conflict" description="In Ref. 3; CAA82631." evidence="10" ref="3">
    <location>
        <begin position="299"/>
        <end position="300"/>
    </location>
</feature>
<feature type="strand" evidence="22">
    <location>
        <begin position="14"/>
        <end position="21"/>
    </location>
</feature>
<feature type="helix" evidence="22">
    <location>
        <begin position="22"/>
        <end position="29"/>
    </location>
</feature>
<feature type="helix" evidence="22">
    <location>
        <begin position="31"/>
        <end position="33"/>
    </location>
</feature>
<feature type="helix" evidence="22">
    <location>
        <begin position="34"/>
        <end position="43"/>
    </location>
</feature>
<feature type="strand" evidence="22">
    <location>
        <begin position="46"/>
        <end position="49"/>
    </location>
</feature>
<feature type="strand" evidence="22">
    <location>
        <begin position="55"/>
        <end position="64"/>
    </location>
</feature>
<feature type="helix" evidence="22">
    <location>
        <begin position="65"/>
        <end position="81"/>
    </location>
</feature>
<feature type="turn" evidence="22">
    <location>
        <begin position="82"/>
        <end position="84"/>
    </location>
</feature>
<feature type="strand" evidence="21">
    <location>
        <begin position="280"/>
        <end position="287"/>
    </location>
</feature>
<feature type="helix" evidence="21">
    <location>
        <begin position="288"/>
        <end position="290"/>
    </location>
</feature>
<feature type="helix" evidence="21">
    <location>
        <begin position="291"/>
        <end position="295"/>
    </location>
</feature>
<feature type="helix" evidence="21">
    <location>
        <begin position="297"/>
        <end position="299"/>
    </location>
</feature>
<feature type="helix" evidence="21">
    <location>
        <begin position="300"/>
        <end position="309"/>
    </location>
</feature>
<feature type="strand" evidence="21">
    <location>
        <begin position="312"/>
        <end position="315"/>
    </location>
</feature>
<feature type="strand" evidence="21">
    <location>
        <begin position="323"/>
        <end position="331"/>
    </location>
</feature>
<feature type="helix" evidence="21">
    <location>
        <begin position="333"/>
        <end position="346"/>
    </location>
</feature>
<gene>
    <name evidence="9 11" type="primary">PCBP1</name>
</gene>
<dbReference type="EMBL" id="X78137">
    <property type="protein sequence ID" value="CAA55016.1"/>
    <property type="molecule type" value="mRNA"/>
</dbReference>
<dbReference type="EMBL" id="U24223">
    <property type="protein sequence ID" value="AAA91317.1"/>
    <property type="molecule type" value="mRNA"/>
</dbReference>
<dbReference type="EMBL" id="Z29505">
    <property type="protein sequence ID" value="CAA82631.1"/>
    <property type="status" value="ALT_FRAME"/>
    <property type="molecule type" value="mRNA"/>
</dbReference>
<dbReference type="EMBL" id="BC039742">
    <property type="protein sequence ID" value="AAH39742.1"/>
    <property type="molecule type" value="mRNA"/>
</dbReference>
<dbReference type="CCDS" id="CCDS1898.1"/>
<dbReference type="RefSeq" id="NP_006187.2">
    <property type="nucleotide sequence ID" value="NM_006196.4"/>
</dbReference>
<dbReference type="PDB" id="1WVN">
    <property type="method" value="X-ray"/>
    <property type="resolution" value="2.10 A"/>
    <property type="chains" value="A=279-356"/>
</dbReference>
<dbReference type="PDB" id="1ZTG">
    <property type="method" value="X-ray"/>
    <property type="resolution" value="3.00 A"/>
    <property type="chains" value="A/B/C/D=14-85"/>
</dbReference>
<dbReference type="PDB" id="3VKE">
    <property type="method" value="X-ray"/>
    <property type="resolution" value="1.77 A"/>
    <property type="chains" value="A/B/C/D=14-86"/>
</dbReference>
<dbReference type="PDBsum" id="1WVN"/>
<dbReference type="PDBsum" id="1ZTG"/>
<dbReference type="PDBsum" id="3VKE"/>
<dbReference type="SMR" id="Q15365"/>
<dbReference type="BioGRID" id="111126">
    <property type="interactions" value="669"/>
</dbReference>
<dbReference type="CORUM" id="Q15365"/>
<dbReference type="DIP" id="DIP-38136N"/>
<dbReference type="FunCoup" id="Q15365">
    <property type="interactions" value="2456"/>
</dbReference>
<dbReference type="IntAct" id="Q15365">
    <property type="interactions" value="163"/>
</dbReference>
<dbReference type="MINT" id="Q15365"/>
<dbReference type="STRING" id="9606.ENSP00000305556"/>
<dbReference type="ChEMBL" id="CHEMBL4295825"/>
<dbReference type="GlyCosmos" id="Q15365">
    <property type="glycosylation" value="2 sites, 1 glycan"/>
</dbReference>
<dbReference type="GlyGen" id="Q15365">
    <property type="glycosylation" value="8 sites, 3 N-linked glycans (3 sites), 1 O-linked glycan (5 sites)"/>
</dbReference>
<dbReference type="iPTMnet" id="Q15365"/>
<dbReference type="MetOSite" id="Q15365"/>
<dbReference type="PhosphoSitePlus" id="Q15365"/>
<dbReference type="SwissPalm" id="Q15365"/>
<dbReference type="BioMuta" id="PCBP1"/>
<dbReference type="DMDM" id="42560548"/>
<dbReference type="OGP" id="Q15365"/>
<dbReference type="REPRODUCTION-2DPAGE" id="IPI00016610"/>
<dbReference type="CPTAC" id="CPTAC-417"/>
<dbReference type="CPTAC" id="CPTAC-418"/>
<dbReference type="jPOST" id="Q15365"/>
<dbReference type="MassIVE" id="Q15365"/>
<dbReference type="PaxDb" id="9606-ENSP00000305556"/>
<dbReference type="PeptideAtlas" id="Q15365"/>
<dbReference type="ProteomicsDB" id="60541"/>
<dbReference type="Pumba" id="Q15365"/>
<dbReference type="TopDownProteomics" id="Q15365"/>
<dbReference type="Antibodypedia" id="16295">
    <property type="antibodies" value="449 antibodies from 36 providers"/>
</dbReference>
<dbReference type="DNASU" id="5093"/>
<dbReference type="Ensembl" id="ENST00000303577.7">
    <property type="protein sequence ID" value="ENSP00000305556.5"/>
    <property type="gene ID" value="ENSG00000169564.7"/>
</dbReference>
<dbReference type="GeneID" id="5093"/>
<dbReference type="KEGG" id="hsa:5093"/>
<dbReference type="MANE-Select" id="ENST00000303577.7">
    <property type="protein sequence ID" value="ENSP00000305556.5"/>
    <property type="RefSeq nucleotide sequence ID" value="NM_006196.4"/>
    <property type="RefSeq protein sequence ID" value="NP_006187.2"/>
</dbReference>
<dbReference type="AGR" id="HGNC:8647"/>
<dbReference type="CTD" id="5093"/>
<dbReference type="DisGeNET" id="5093"/>
<dbReference type="GeneCards" id="PCBP1"/>
<dbReference type="HGNC" id="HGNC:8647">
    <property type="gene designation" value="PCBP1"/>
</dbReference>
<dbReference type="HPA" id="ENSG00000169564">
    <property type="expression patterns" value="Low tissue specificity"/>
</dbReference>
<dbReference type="MalaCards" id="PCBP1"/>
<dbReference type="MIM" id="601209">
    <property type="type" value="gene"/>
</dbReference>
<dbReference type="neXtProt" id="NX_Q15365"/>
<dbReference type="OpenTargets" id="ENSG00000169564"/>
<dbReference type="PharmGKB" id="PA32986"/>
<dbReference type="VEuPathDB" id="HostDB:ENSG00000169564"/>
<dbReference type="eggNOG" id="KOG2190">
    <property type="taxonomic scope" value="Eukaryota"/>
</dbReference>
<dbReference type="GeneTree" id="ENSGT00940000161582"/>
<dbReference type="HOGENOM" id="CLU_022670_0_1_1"/>
<dbReference type="InParanoid" id="Q15365"/>
<dbReference type="OMA" id="SHHLIGY"/>
<dbReference type="OrthoDB" id="442947at2759"/>
<dbReference type="PAN-GO" id="Q15365">
    <property type="GO annotations" value="6 GO annotations based on evolutionary models"/>
</dbReference>
<dbReference type="PhylomeDB" id="Q15365"/>
<dbReference type="TreeFam" id="TF318292"/>
<dbReference type="PathwayCommons" id="Q15365"/>
<dbReference type="Reactome" id="R-HSA-72163">
    <property type="pathway name" value="mRNA Splicing - Major Pathway"/>
</dbReference>
<dbReference type="Reactome" id="R-HSA-72203">
    <property type="pathway name" value="Processing of Capped Intron-Containing Pre-mRNA"/>
</dbReference>
<dbReference type="SignaLink" id="Q15365"/>
<dbReference type="SIGNOR" id="Q15365"/>
<dbReference type="BioGRID-ORCS" id="5093">
    <property type="hits" value="811 hits in 1165 CRISPR screens"/>
</dbReference>
<dbReference type="CD-CODE" id="232F8A39">
    <property type="entry name" value="P-body"/>
</dbReference>
<dbReference type="CD-CODE" id="804901D1">
    <property type="entry name" value="Nuclear speckle"/>
</dbReference>
<dbReference type="CD-CODE" id="91857CE7">
    <property type="entry name" value="Nucleolus"/>
</dbReference>
<dbReference type="CD-CODE" id="DEE660B4">
    <property type="entry name" value="Stress granule"/>
</dbReference>
<dbReference type="CD-CODE" id="FB4E32DD">
    <property type="entry name" value="Presynaptic clusters and postsynaptic densities"/>
</dbReference>
<dbReference type="ChiTaRS" id="PCBP1">
    <property type="organism name" value="human"/>
</dbReference>
<dbReference type="EvolutionaryTrace" id="Q15365"/>
<dbReference type="GeneWiki" id="PCBP1"/>
<dbReference type="GenomeRNAi" id="5093"/>
<dbReference type="Pharos" id="Q15365">
    <property type="development level" value="Tbio"/>
</dbReference>
<dbReference type="PRO" id="PR:Q15365"/>
<dbReference type="Proteomes" id="UP000005640">
    <property type="component" value="Chromosome 2"/>
</dbReference>
<dbReference type="RNAct" id="Q15365">
    <property type="molecule type" value="protein"/>
</dbReference>
<dbReference type="Bgee" id="ENSG00000169564">
    <property type="expression patterns" value="Expressed in oocyte and 209 other cell types or tissues"/>
</dbReference>
<dbReference type="ExpressionAtlas" id="Q15365">
    <property type="expression patterns" value="baseline and differential"/>
</dbReference>
<dbReference type="GO" id="GO:0005737">
    <property type="term" value="C:cytoplasm"/>
    <property type="evidence" value="ECO:0000314"/>
    <property type="project" value="BHF-UCL"/>
</dbReference>
<dbReference type="GO" id="GO:0036464">
    <property type="term" value="C:cytoplasmic ribonucleoprotein granule"/>
    <property type="evidence" value="ECO:0000314"/>
    <property type="project" value="HPA"/>
</dbReference>
<dbReference type="GO" id="GO:0005829">
    <property type="term" value="C:cytosol"/>
    <property type="evidence" value="ECO:0000314"/>
    <property type="project" value="HPA"/>
</dbReference>
<dbReference type="GO" id="GO:0070062">
    <property type="term" value="C:extracellular exosome"/>
    <property type="evidence" value="ECO:0007005"/>
    <property type="project" value="UniProtKB"/>
</dbReference>
<dbReference type="GO" id="GO:0016020">
    <property type="term" value="C:membrane"/>
    <property type="evidence" value="ECO:0007005"/>
    <property type="project" value="UniProtKB"/>
</dbReference>
<dbReference type="GO" id="GO:0016607">
    <property type="term" value="C:nuclear speck"/>
    <property type="evidence" value="ECO:0000314"/>
    <property type="project" value="HPA"/>
</dbReference>
<dbReference type="GO" id="GO:0005654">
    <property type="term" value="C:nucleoplasm"/>
    <property type="evidence" value="ECO:0000314"/>
    <property type="project" value="HPA"/>
</dbReference>
<dbReference type="GO" id="GO:0005634">
    <property type="term" value="C:nucleus"/>
    <property type="evidence" value="ECO:0000318"/>
    <property type="project" value="GO_Central"/>
</dbReference>
<dbReference type="GO" id="GO:0014069">
    <property type="term" value="C:postsynaptic density"/>
    <property type="evidence" value="ECO:0007669"/>
    <property type="project" value="Ensembl"/>
</dbReference>
<dbReference type="GO" id="GO:1990904">
    <property type="term" value="C:ribonucleoprotein complex"/>
    <property type="evidence" value="ECO:0007669"/>
    <property type="project" value="UniProtKB-KW"/>
</dbReference>
<dbReference type="GO" id="GO:0045296">
    <property type="term" value="F:cadherin binding"/>
    <property type="evidence" value="ECO:0007005"/>
    <property type="project" value="BHF-UCL"/>
</dbReference>
<dbReference type="GO" id="GO:0000981">
    <property type="term" value="F:DNA-binding transcription factor activity, RNA polymerase II-specific"/>
    <property type="evidence" value="ECO:0007669"/>
    <property type="project" value="Ensembl"/>
</dbReference>
<dbReference type="GO" id="GO:0003729">
    <property type="term" value="F:mRNA binding"/>
    <property type="evidence" value="ECO:0000314"/>
    <property type="project" value="BHF-UCL"/>
</dbReference>
<dbReference type="GO" id="GO:0003723">
    <property type="term" value="F:RNA binding"/>
    <property type="evidence" value="ECO:0000314"/>
    <property type="project" value="UniProtKB"/>
</dbReference>
<dbReference type="GO" id="GO:0098847">
    <property type="term" value="F:sequence-specific single stranded DNA binding"/>
    <property type="evidence" value="ECO:0007669"/>
    <property type="project" value="Ensembl"/>
</dbReference>
<dbReference type="GO" id="GO:0003697">
    <property type="term" value="F:single-stranded DNA binding"/>
    <property type="evidence" value="ECO:0000314"/>
    <property type="project" value="UniProtKB"/>
</dbReference>
<dbReference type="GO" id="GO:0045944">
    <property type="term" value="P:positive regulation of transcription by RNA polymerase II"/>
    <property type="evidence" value="ECO:0000318"/>
    <property type="project" value="GO_Central"/>
</dbReference>
<dbReference type="GO" id="GO:0039694">
    <property type="term" value="P:viral RNA genome replication"/>
    <property type="evidence" value="ECO:0000314"/>
    <property type="project" value="UniProtKB"/>
</dbReference>
<dbReference type="CDD" id="cd22515">
    <property type="entry name" value="KH-I_PCBP1_2_rpt1"/>
    <property type="match status" value="1"/>
</dbReference>
<dbReference type="CDD" id="cd22518">
    <property type="entry name" value="KH-I_PCBP1_2_rpt2"/>
    <property type="match status" value="1"/>
</dbReference>
<dbReference type="CDD" id="cd22521">
    <property type="entry name" value="KH-I_PCBP1_2_rpt3"/>
    <property type="match status" value="1"/>
</dbReference>
<dbReference type="FunFam" id="3.30.1370.10:FF:000002">
    <property type="entry name" value="poly(RC)-binding protein 2 isoform X1"/>
    <property type="match status" value="1"/>
</dbReference>
<dbReference type="FunFam" id="3.30.1370.10:FF:000003">
    <property type="entry name" value="poly(RC)-binding protein 2 isoform X1"/>
    <property type="match status" value="1"/>
</dbReference>
<dbReference type="FunFam" id="3.30.1370.10:FF:000005">
    <property type="entry name" value="poly(RC)-binding protein 2 isoform X1"/>
    <property type="match status" value="1"/>
</dbReference>
<dbReference type="Gene3D" id="3.30.1370.10">
    <property type="entry name" value="K Homology domain, type 1"/>
    <property type="match status" value="3"/>
</dbReference>
<dbReference type="InterPro" id="IPR004087">
    <property type="entry name" value="KH_dom"/>
</dbReference>
<dbReference type="InterPro" id="IPR004088">
    <property type="entry name" value="KH_dom_type_1"/>
</dbReference>
<dbReference type="InterPro" id="IPR036612">
    <property type="entry name" value="KH_dom_type_1_sf"/>
</dbReference>
<dbReference type="PANTHER" id="PTHR10288">
    <property type="entry name" value="KH DOMAIN CONTAINING RNA BINDING PROTEIN"/>
    <property type="match status" value="1"/>
</dbReference>
<dbReference type="Pfam" id="PF00013">
    <property type="entry name" value="KH_1"/>
    <property type="match status" value="3"/>
</dbReference>
<dbReference type="SMART" id="SM00322">
    <property type="entry name" value="KH"/>
    <property type="match status" value="3"/>
</dbReference>
<dbReference type="SUPFAM" id="SSF54791">
    <property type="entry name" value="Eukaryotic type KH-domain (KH-domain type I)"/>
    <property type="match status" value="3"/>
</dbReference>
<dbReference type="PROSITE" id="PS50084">
    <property type="entry name" value="KH_TYPE_1"/>
    <property type="match status" value="3"/>
</dbReference>
<proteinExistence type="evidence at protein level"/>
<keyword id="KW-0002">3D-structure</keyword>
<keyword id="KW-0007">Acetylation</keyword>
<keyword id="KW-0963">Cytoplasm</keyword>
<keyword id="KW-0903">Direct protein sequencing</keyword>
<keyword id="KW-0238">DNA-binding</keyword>
<keyword id="KW-1017">Isopeptide bond</keyword>
<keyword id="KW-0539">Nucleus</keyword>
<keyword id="KW-0597">Phosphoprotein</keyword>
<keyword id="KW-1267">Proteomics identification</keyword>
<keyword id="KW-1185">Reference proteome</keyword>
<keyword id="KW-0677">Repeat</keyword>
<keyword id="KW-0687">Ribonucleoprotein</keyword>
<keyword id="KW-0694">RNA-binding</keyword>
<keyword id="KW-0832">Ubl conjugation</keyword>
<keyword id="KW-0693">Viral RNA replication</keyword>
<accession>Q15365</accession>
<accession>Q13157</accession>
<accession>Q14975</accession>